<keyword id="KW-0963">Cytoplasm</keyword>
<keyword id="KW-0444">Lipid biosynthesis</keyword>
<keyword id="KW-0443">Lipid metabolism</keyword>
<keyword id="KW-0594">Phospholipid biosynthesis</keyword>
<keyword id="KW-1208">Phospholipid metabolism</keyword>
<keyword id="KW-0808">Transferase</keyword>
<name>PLSX_STAAE</name>
<dbReference type="EC" id="2.3.1.274" evidence="1"/>
<dbReference type="EMBL" id="AP009351">
    <property type="protein sequence ID" value="BAF67411.1"/>
    <property type="molecule type" value="Genomic_DNA"/>
</dbReference>
<dbReference type="RefSeq" id="WP_000239744.1">
    <property type="nucleotide sequence ID" value="NZ_JBBIAE010000001.1"/>
</dbReference>
<dbReference type="SMR" id="A6QGC9"/>
<dbReference type="KEGG" id="sae:NWMN_1139"/>
<dbReference type="HOGENOM" id="CLU_039379_1_1_9"/>
<dbReference type="UniPathway" id="UPA00085"/>
<dbReference type="Proteomes" id="UP000006386">
    <property type="component" value="Chromosome"/>
</dbReference>
<dbReference type="GO" id="GO:0005737">
    <property type="term" value="C:cytoplasm"/>
    <property type="evidence" value="ECO:0007669"/>
    <property type="project" value="UniProtKB-SubCell"/>
</dbReference>
<dbReference type="GO" id="GO:0043811">
    <property type="term" value="F:phosphate:acyl-[acyl carrier protein] acyltransferase activity"/>
    <property type="evidence" value="ECO:0007669"/>
    <property type="project" value="UniProtKB-UniRule"/>
</dbReference>
<dbReference type="GO" id="GO:0006633">
    <property type="term" value="P:fatty acid biosynthetic process"/>
    <property type="evidence" value="ECO:0007669"/>
    <property type="project" value="UniProtKB-UniRule"/>
</dbReference>
<dbReference type="GO" id="GO:0008654">
    <property type="term" value="P:phospholipid biosynthetic process"/>
    <property type="evidence" value="ECO:0007669"/>
    <property type="project" value="UniProtKB-KW"/>
</dbReference>
<dbReference type="Gene3D" id="3.40.718.10">
    <property type="entry name" value="Isopropylmalate Dehydrogenase"/>
    <property type="match status" value="1"/>
</dbReference>
<dbReference type="HAMAP" id="MF_00019">
    <property type="entry name" value="PlsX"/>
    <property type="match status" value="1"/>
</dbReference>
<dbReference type="InterPro" id="IPR003664">
    <property type="entry name" value="FA_synthesis"/>
</dbReference>
<dbReference type="InterPro" id="IPR012281">
    <property type="entry name" value="Phospholipid_synth_PlsX-like"/>
</dbReference>
<dbReference type="NCBIfam" id="TIGR00182">
    <property type="entry name" value="plsX"/>
    <property type="match status" value="1"/>
</dbReference>
<dbReference type="PANTHER" id="PTHR30100">
    <property type="entry name" value="FATTY ACID/PHOSPHOLIPID SYNTHESIS PROTEIN PLSX"/>
    <property type="match status" value="1"/>
</dbReference>
<dbReference type="PANTHER" id="PTHR30100:SF1">
    <property type="entry name" value="PHOSPHATE ACYLTRANSFERASE"/>
    <property type="match status" value="1"/>
</dbReference>
<dbReference type="Pfam" id="PF02504">
    <property type="entry name" value="FA_synthesis"/>
    <property type="match status" value="1"/>
</dbReference>
<dbReference type="PIRSF" id="PIRSF002465">
    <property type="entry name" value="Phsphlp_syn_PlsX"/>
    <property type="match status" value="1"/>
</dbReference>
<dbReference type="SUPFAM" id="SSF53659">
    <property type="entry name" value="Isocitrate/Isopropylmalate dehydrogenase-like"/>
    <property type="match status" value="1"/>
</dbReference>
<proteinExistence type="inferred from homology"/>
<feature type="chain" id="PRO_1000070992" description="Phosphate acyltransferase">
    <location>
        <begin position="1"/>
        <end position="328"/>
    </location>
</feature>
<gene>
    <name evidence="1" type="primary">plsX</name>
    <name type="ordered locus">NWMN_1139</name>
</gene>
<evidence type="ECO:0000255" key="1">
    <source>
        <dbReference type="HAMAP-Rule" id="MF_00019"/>
    </source>
</evidence>
<comment type="function">
    <text evidence="1">Catalyzes the reversible formation of acyl-phosphate (acyl-PO(4)) from acyl-[acyl-carrier-protein] (acyl-ACP). This enzyme utilizes acyl-ACP as fatty acyl donor, but not acyl-CoA.</text>
</comment>
<comment type="catalytic activity">
    <reaction evidence="1">
        <text>a fatty acyl-[ACP] + phosphate = an acyl phosphate + holo-[ACP]</text>
        <dbReference type="Rhea" id="RHEA:42292"/>
        <dbReference type="Rhea" id="RHEA-COMP:9685"/>
        <dbReference type="Rhea" id="RHEA-COMP:14125"/>
        <dbReference type="ChEBI" id="CHEBI:43474"/>
        <dbReference type="ChEBI" id="CHEBI:59918"/>
        <dbReference type="ChEBI" id="CHEBI:64479"/>
        <dbReference type="ChEBI" id="CHEBI:138651"/>
        <dbReference type="EC" id="2.3.1.274"/>
    </reaction>
</comment>
<comment type="pathway">
    <text evidence="1">Lipid metabolism; phospholipid metabolism.</text>
</comment>
<comment type="subunit">
    <text evidence="1">Homodimer. Probably interacts with PlsY.</text>
</comment>
<comment type="subcellular location">
    <subcellularLocation>
        <location evidence="1">Cytoplasm</location>
    </subcellularLocation>
    <text evidence="1">Associated with the membrane possibly through PlsY.</text>
</comment>
<comment type="similarity">
    <text evidence="1">Belongs to the PlsX family.</text>
</comment>
<reference key="1">
    <citation type="journal article" date="2008" name="J. Bacteriol.">
        <title>Genome sequence of Staphylococcus aureus strain Newman and comparative analysis of staphylococcal genomes: polymorphism and evolution of two major pathogenicity islands.</title>
        <authorList>
            <person name="Baba T."/>
            <person name="Bae T."/>
            <person name="Schneewind O."/>
            <person name="Takeuchi F."/>
            <person name="Hiramatsu K."/>
        </authorList>
    </citation>
    <scope>NUCLEOTIDE SEQUENCE [LARGE SCALE GENOMIC DNA]</scope>
    <source>
        <strain>Newman</strain>
    </source>
</reference>
<sequence length="328" mass="35431">MVKLAIDMMGGDNAPDIVLEAVQKAVEDFKDLEIILFGDEKKYNLNHERIEFRHCSEKIEMEDEPVRAIKRKKDSSMVKMAEAVKSGEADGCVSAGNTGALMSAGLFIVGRIKGVARPALVVTLPTIDGKGFVFLDVGANADAKPEHLLQYAQLGDIYAQKIRGIDNPKISLLNIGTEPAKGNSLTKKSYELLNHDHSLNFVGNIEAKTLMDGDTDVVVTDGYTGNMVLKNLEGTAKSIGKMLKDTIMSSTKNKLAGAILKKDLAEFAKKMDYSEYGGSVLLGLEGTVVKAHGSSNAKAFYSAIRQAKIAGEQNIVQTMKETVGESNE</sequence>
<organism>
    <name type="scientific">Staphylococcus aureus (strain Newman)</name>
    <dbReference type="NCBI Taxonomy" id="426430"/>
    <lineage>
        <taxon>Bacteria</taxon>
        <taxon>Bacillati</taxon>
        <taxon>Bacillota</taxon>
        <taxon>Bacilli</taxon>
        <taxon>Bacillales</taxon>
        <taxon>Staphylococcaceae</taxon>
        <taxon>Staphylococcus</taxon>
    </lineage>
</organism>
<protein>
    <recommendedName>
        <fullName evidence="1">Phosphate acyltransferase</fullName>
        <ecNumber evidence="1">2.3.1.274</ecNumber>
    </recommendedName>
    <alternativeName>
        <fullName evidence="1">Acyl-ACP phosphotransacylase</fullName>
    </alternativeName>
    <alternativeName>
        <fullName evidence="1">Acyl-[acyl-carrier-protein]--phosphate acyltransferase</fullName>
    </alternativeName>
    <alternativeName>
        <fullName evidence="1">Phosphate-acyl-ACP acyltransferase</fullName>
    </alternativeName>
</protein>
<accession>A6QGC9</accession>